<organism>
    <name type="scientific">Corynebacterium jeikeium (strain K411)</name>
    <dbReference type="NCBI Taxonomy" id="306537"/>
    <lineage>
        <taxon>Bacteria</taxon>
        <taxon>Bacillati</taxon>
        <taxon>Actinomycetota</taxon>
        <taxon>Actinomycetes</taxon>
        <taxon>Mycobacteriales</taxon>
        <taxon>Corynebacteriaceae</taxon>
        <taxon>Corynebacterium</taxon>
    </lineage>
</organism>
<reference key="1">
    <citation type="journal article" date="2005" name="J. Bacteriol.">
        <title>Complete genome sequence and analysis of the multiresistant nosocomial pathogen Corynebacterium jeikeium K411, a lipid-requiring bacterium of the human skin flora.</title>
        <authorList>
            <person name="Tauch A."/>
            <person name="Kaiser O."/>
            <person name="Hain T."/>
            <person name="Goesmann A."/>
            <person name="Weisshaar B."/>
            <person name="Albersmeier A."/>
            <person name="Bekel T."/>
            <person name="Bischoff N."/>
            <person name="Brune I."/>
            <person name="Chakraborty T."/>
            <person name="Kalinowski J."/>
            <person name="Meyer F."/>
            <person name="Rupp O."/>
            <person name="Schneiker S."/>
            <person name="Viehoever P."/>
            <person name="Puehler A."/>
        </authorList>
    </citation>
    <scope>NUCLEOTIDE SEQUENCE [LARGE SCALE GENOMIC DNA]</scope>
    <source>
        <strain>K411</strain>
    </source>
</reference>
<sequence>MSVPNSPEAPWAVGQLNDQVKNWIQRLGFIWVEGQVTQVNMKSTWRFSYITLRDVNLEASVSLTVETSALKNLATPVKDGDRIVVHGKPSFYSKRGSFSLWVTEIRQVGIGQLLAQIEQLKKAMFAEGLFDPRLKTPLPFLPTTVGLITGRGSAAERDVMEVAKRRWPAVRFRVINTAVQGPKTVPQVVDALQELERDSAVDVIIVARGGGSVEDLLPFSEETLVREVSRLRTPVVSAIGHEPDNPLLDYVADVRAATPTDAAKTVVPDVVQELRIISEARQRGAGALRNWVAHERKGLAQIRTRPVMADPSLPVARQQDIIAEALQRKDRALGVHVRSLRSSIESLKAQVNALGPSQTLARGYSIVQVIPRDKSGAQVVTTVDQVTPGSQLRIRVPDGSITAAAMGVQAAPGGVMNKNSNTTDSTDNTENGTGEA</sequence>
<comment type="function">
    <text evidence="1">Bidirectionally degrades single-stranded DNA into large acid-insoluble oligonucleotides, which are then degraded further into small acid-soluble oligonucleotides.</text>
</comment>
<comment type="catalytic activity">
    <reaction evidence="1">
        <text>Exonucleolytic cleavage in either 5'- to 3'- or 3'- to 5'-direction to yield nucleoside 5'-phosphates.</text>
        <dbReference type="EC" id="3.1.11.6"/>
    </reaction>
</comment>
<comment type="subunit">
    <text evidence="1">Heterooligomer composed of large and small subunits.</text>
</comment>
<comment type="subcellular location">
    <subcellularLocation>
        <location evidence="1">Cytoplasm</location>
    </subcellularLocation>
</comment>
<comment type="similarity">
    <text evidence="1">Belongs to the XseA family.</text>
</comment>
<evidence type="ECO:0000255" key="1">
    <source>
        <dbReference type="HAMAP-Rule" id="MF_00378"/>
    </source>
</evidence>
<evidence type="ECO:0000256" key="2">
    <source>
        <dbReference type="SAM" id="MobiDB-lite"/>
    </source>
</evidence>
<accession>Q4JU84</accession>
<keyword id="KW-0963">Cytoplasm</keyword>
<keyword id="KW-0269">Exonuclease</keyword>
<keyword id="KW-0378">Hydrolase</keyword>
<keyword id="KW-0540">Nuclease</keyword>
<keyword id="KW-1185">Reference proteome</keyword>
<protein>
    <recommendedName>
        <fullName evidence="1">Exodeoxyribonuclease 7 large subunit</fullName>
        <ecNumber evidence="1">3.1.11.6</ecNumber>
    </recommendedName>
    <alternativeName>
        <fullName evidence="1">Exodeoxyribonuclease VII large subunit</fullName>
        <shortName evidence="1">Exonuclease VII large subunit</shortName>
    </alternativeName>
</protein>
<name>EX7L_CORJK</name>
<gene>
    <name evidence="1" type="primary">xseA</name>
    <name type="ordered locus">jk1450</name>
</gene>
<proteinExistence type="inferred from homology"/>
<dbReference type="EC" id="3.1.11.6" evidence="1"/>
<dbReference type="EMBL" id="CR931997">
    <property type="protein sequence ID" value="CAI37623.1"/>
    <property type="molecule type" value="Genomic_DNA"/>
</dbReference>
<dbReference type="RefSeq" id="WP_011273887.1">
    <property type="nucleotide sequence ID" value="NC_007164.1"/>
</dbReference>
<dbReference type="SMR" id="Q4JU84"/>
<dbReference type="STRING" id="306537.jk1450"/>
<dbReference type="KEGG" id="cjk:jk1450"/>
<dbReference type="PATRIC" id="fig|306537.10.peg.1470"/>
<dbReference type="eggNOG" id="COG1570">
    <property type="taxonomic scope" value="Bacteria"/>
</dbReference>
<dbReference type="HOGENOM" id="CLU_023625_2_1_11"/>
<dbReference type="OrthoDB" id="9802795at2"/>
<dbReference type="Proteomes" id="UP000000545">
    <property type="component" value="Chromosome"/>
</dbReference>
<dbReference type="GO" id="GO:0005737">
    <property type="term" value="C:cytoplasm"/>
    <property type="evidence" value="ECO:0007669"/>
    <property type="project" value="UniProtKB-SubCell"/>
</dbReference>
<dbReference type="GO" id="GO:0009318">
    <property type="term" value="C:exodeoxyribonuclease VII complex"/>
    <property type="evidence" value="ECO:0007669"/>
    <property type="project" value="InterPro"/>
</dbReference>
<dbReference type="GO" id="GO:0008855">
    <property type="term" value="F:exodeoxyribonuclease VII activity"/>
    <property type="evidence" value="ECO:0007669"/>
    <property type="project" value="UniProtKB-UniRule"/>
</dbReference>
<dbReference type="GO" id="GO:0003676">
    <property type="term" value="F:nucleic acid binding"/>
    <property type="evidence" value="ECO:0007669"/>
    <property type="project" value="InterPro"/>
</dbReference>
<dbReference type="GO" id="GO:0006308">
    <property type="term" value="P:DNA catabolic process"/>
    <property type="evidence" value="ECO:0007669"/>
    <property type="project" value="UniProtKB-UniRule"/>
</dbReference>
<dbReference type="CDD" id="cd04489">
    <property type="entry name" value="ExoVII_LU_OBF"/>
    <property type="match status" value="1"/>
</dbReference>
<dbReference type="HAMAP" id="MF_00378">
    <property type="entry name" value="Exonuc_7_L"/>
    <property type="match status" value="1"/>
</dbReference>
<dbReference type="InterPro" id="IPR003753">
    <property type="entry name" value="Exonuc_VII_L"/>
</dbReference>
<dbReference type="InterPro" id="IPR020579">
    <property type="entry name" value="Exonuc_VII_lsu_C"/>
</dbReference>
<dbReference type="InterPro" id="IPR025824">
    <property type="entry name" value="OB-fold_nuc-bd_dom"/>
</dbReference>
<dbReference type="NCBIfam" id="TIGR00237">
    <property type="entry name" value="xseA"/>
    <property type="match status" value="1"/>
</dbReference>
<dbReference type="PANTHER" id="PTHR30008">
    <property type="entry name" value="EXODEOXYRIBONUCLEASE 7 LARGE SUBUNIT"/>
    <property type="match status" value="1"/>
</dbReference>
<dbReference type="PANTHER" id="PTHR30008:SF0">
    <property type="entry name" value="EXODEOXYRIBONUCLEASE 7 LARGE SUBUNIT"/>
    <property type="match status" value="1"/>
</dbReference>
<dbReference type="Pfam" id="PF02601">
    <property type="entry name" value="Exonuc_VII_L"/>
    <property type="match status" value="2"/>
</dbReference>
<dbReference type="Pfam" id="PF13742">
    <property type="entry name" value="tRNA_anti_2"/>
    <property type="match status" value="1"/>
</dbReference>
<feature type="chain" id="PRO_0000303785" description="Exodeoxyribonuclease 7 large subunit">
    <location>
        <begin position="1"/>
        <end position="436"/>
    </location>
</feature>
<feature type="region of interest" description="Disordered" evidence="2">
    <location>
        <begin position="412"/>
        <end position="436"/>
    </location>
</feature>
<feature type="compositionally biased region" description="Low complexity" evidence="2">
    <location>
        <begin position="417"/>
        <end position="436"/>
    </location>
</feature>